<protein>
    <recommendedName>
        <fullName>DNA-directed RNA polymerase III subunit rpc2</fullName>
        <shortName>RNA polymerase III subunit C2</shortName>
        <ecNumber>2.7.7.6</ecNumber>
    </recommendedName>
    <alternativeName>
        <fullName>DNA-directed RNA polymerase III subunit B</fullName>
    </alternativeName>
    <component>
        <recommendedName>
            <fullName>Ddi rpc2 intein</fullName>
        </recommendedName>
    </component>
</protein>
<feature type="chain" id="PRO_0000328068" description="DNA-directed RNA polymerase III subunit rpc2, 1st part" evidence="2">
    <location>
        <begin position="1"/>
        <end position="505"/>
    </location>
</feature>
<feature type="chain" id="PRO_0000328069" description="Ddi rpc2 intein" evidence="2">
    <location>
        <begin position="506"/>
        <end position="969"/>
    </location>
</feature>
<feature type="chain" id="PRO_0000328070" description="DNA-directed RNA polymerase III subunit rpc2, 2nd part" evidence="2">
    <location>
        <begin position="970"/>
        <end position="1608"/>
    </location>
</feature>
<feature type="zinc finger region" description="C4-type">
    <location>
        <begin position="1557"/>
        <end position="1572"/>
    </location>
</feature>
<feature type="binding site" evidence="1">
    <location>
        <position position="1557"/>
    </location>
    <ligand>
        <name>Zn(2+)</name>
        <dbReference type="ChEBI" id="CHEBI:29105"/>
    </ligand>
</feature>
<feature type="binding site" evidence="1">
    <location>
        <position position="1560"/>
    </location>
    <ligand>
        <name>Zn(2+)</name>
        <dbReference type="ChEBI" id="CHEBI:29105"/>
    </ligand>
</feature>
<feature type="binding site" evidence="1">
    <location>
        <position position="1569"/>
    </location>
    <ligand>
        <name>Zn(2+)</name>
        <dbReference type="ChEBI" id="CHEBI:29105"/>
    </ligand>
</feature>
<feature type="binding site" evidence="1">
    <location>
        <position position="1572"/>
    </location>
    <ligand>
        <name>Zn(2+)</name>
        <dbReference type="ChEBI" id="CHEBI:29105"/>
    </ligand>
</feature>
<comment type="function">
    <text evidence="1">DNA-dependent RNA polymerase catalyzes the transcription of DNA into RNA using the four ribonucleoside triphosphates as substrates. Second largest core component of RNA polymerase III which synthesizes small RNAs, such as 5S rRNA and tRNAs. Proposed to contribute to the polymerase catalytic activity and forms the polymerase active center together with the largest subunit. Pol III is composed of mobile elements and rpc2 is part of the core element with the central large cleft and probably a clamp element that moves to open and close the cleft (By similarity).</text>
</comment>
<comment type="catalytic activity">
    <reaction>
        <text>RNA(n) + a ribonucleoside 5'-triphosphate = RNA(n+1) + diphosphate</text>
        <dbReference type="Rhea" id="RHEA:21248"/>
        <dbReference type="Rhea" id="RHEA-COMP:14527"/>
        <dbReference type="Rhea" id="RHEA-COMP:17342"/>
        <dbReference type="ChEBI" id="CHEBI:33019"/>
        <dbReference type="ChEBI" id="CHEBI:61557"/>
        <dbReference type="ChEBI" id="CHEBI:140395"/>
        <dbReference type="EC" id="2.7.7.6"/>
    </reaction>
</comment>
<comment type="subunit">
    <text>Component of the RNA polymerase III (Pol III) complex.</text>
</comment>
<comment type="subcellular location">
    <subcellularLocation>
        <location evidence="1">Nucleus</location>
    </subcellularLocation>
</comment>
<comment type="PTM">
    <text evidence="3">This protein undergoes a protein self splicing that involves a post-translational excision of the intervening region (intein) followed by peptide ligation.</text>
</comment>
<comment type="similarity">
    <text evidence="3">Belongs to the RNA polymerase beta chain family.</text>
</comment>
<evidence type="ECO:0000250" key="1"/>
<evidence type="ECO:0000255" key="2"/>
<evidence type="ECO:0000305" key="3"/>
<gene>
    <name type="primary">polr3b</name>
    <name type="synonym">rpc2</name>
    <name type="ORF">DDB_G0288449</name>
</gene>
<reference key="1">
    <citation type="journal article" date="2005" name="Nature">
        <title>The genome of the social amoeba Dictyostelium discoideum.</title>
        <authorList>
            <person name="Eichinger L."/>
            <person name="Pachebat J.A."/>
            <person name="Gloeckner G."/>
            <person name="Rajandream M.A."/>
            <person name="Sucgang R."/>
            <person name="Berriman M."/>
            <person name="Song J."/>
            <person name="Olsen R."/>
            <person name="Szafranski K."/>
            <person name="Xu Q."/>
            <person name="Tunggal B."/>
            <person name="Kummerfeld S."/>
            <person name="Madera M."/>
            <person name="Konfortov B.A."/>
            <person name="Rivero F."/>
            <person name="Bankier A.T."/>
            <person name="Lehmann R."/>
            <person name="Hamlin N."/>
            <person name="Davies R."/>
            <person name="Gaudet P."/>
            <person name="Fey P."/>
            <person name="Pilcher K."/>
            <person name="Chen G."/>
            <person name="Saunders D."/>
            <person name="Sodergren E.J."/>
            <person name="Davis P."/>
            <person name="Kerhornou A."/>
            <person name="Nie X."/>
            <person name="Hall N."/>
            <person name="Anjard C."/>
            <person name="Hemphill L."/>
            <person name="Bason N."/>
            <person name="Farbrother P."/>
            <person name="Desany B."/>
            <person name="Just E."/>
            <person name="Morio T."/>
            <person name="Rost R."/>
            <person name="Churcher C.M."/>
            <person name="Cooper J."/>
            <person name="Haydock S."/>
            <person name="van Driessche N."/>
            <person name="Cronin A."/>
            <person name="Goodhead I."/>
            <person name="Muzny D.M."/>
            <person name="Mourier T."/>
            <person name="Pain A."/>
            <person name="Lu M."/>
            <person name="Harper D."/>
            <person name="Lindsay R."/>
            <person name="Hauser H."/>
            <person name="James K.D."/>
            <person name="Quiles M."/>
            <person name="Madan Babu M."/>
            <person name="Saito T."/>
            <person name="Buchrieser C."/>
            <person name="Wardroper A."/>
            <person name="Felder M."/>
            <person name="Thangavelu M."/>
            <person name="Johnson D."/>
            <person name="Knights A."/>
            <person name="Loulseged H."/>
            <person name="Mungall K.L."/>
            <person name="Oliver K."/>
            <person name="Price C."/>
            <person name="Quail M.A."/>
            <person name="Urushihara H."/>
            <person name="Hernandez J."/>
            <person name="Rabbinowitsch E."/>
            <person name="Steffen D."/>
            <person name="Sanders M."/>
            <person name="Ma J."/>
            <person name="Kohara Y."/>
            <person name="Sharp S."/>
            <person name="Simmonds M.N."/>
            <person name="Spiegler S."/>
            <person name="Tivey A."/>
            <person name="Sugano S."/>
            <person name="White B."/>
            <person name="Walker D."/>
            <person name="Woodward J.R."/>
            <person name="Winckler T."/>
            <person name="Tanaka Y."/>
            <person name="Shaulsky G."/>
            <person name="Schleicher M."/>
            <person name="Weinstock G.M."/>
            <person name="Rosenthal A."/>
            <person name="Cox E.C."/>
            <person name="Chisholm R.L."/>
            <person name="Gibbs R.A."/>
            <person name="Loomis W.F."/>
            <person name="Platzer M."/>
            <person name="Kay R.R."/>
            <person name="Williams J.G."/>
            <person name="Dear P.H."/>
            <person name="Noegel A.A."/>
            <person name="Barrell B.G."/>
            <person name="Kuspa A."/>
        </authorList>
    </citation>
    <scope>NUCLEOTIDE SEQUENCE [LARGE SCALE GENOMIC DNA]</scope>
    <source>
        <strain>AX4</strain>
    </source>
</reference>
<reference key="2">
    <citation type="journal article" date="2006" name="BMC Biol.">
        <title>Multiple, non-allelic, intein-coding sequences in eukaryotic RNA polymerase genes.</title>
        <authorList>
            <person name="Goodwin T.J."/>
            <person name="Butler M.I."/>
            <person name="Poulter R.T."/>
        </authorList>
    </citation>
    <scope>IDENTIFICATION OF INTEIN</scope>
    <scope>NOMENCLATURE</scope>
</reference>
<dbReference type="EC" id="2.7.7.6"/>
<dbReference type="EMBL" id="AAFI02000111">
    <property type="protein sequence ID" value="EAL63250.1"/>
    <property type="molecule type" value="Genomic_DNA"/>
</dbReference>
<dbReference type="RefSeq" id="XP_636731.1">
    <property type="nucleotide sequence ID" value="XM_631639.1"/>
</dbReference>
<dbReference type="SMR" id="Q54IZ9"/>
<dbReference type="FunCoup" id="Q54IZ9">
    <property type="interactions" value="583"/>
</dbReference>
<dbReference type="STRING" id="44689.Q54IZ9"/>
<dbReference type="PaxDb" id="44689-DDB0216313"/>
<dbReference type="EnsemblProtists" id="EAL63250">
    <property type="protein sequence ID" value="EAL63250"/>
    <property type="gene ID" value="DDB_G0288449"/>
</dbReference>
<dbReference type="GeneID" id="8626608"/>
<dbReference type="KEGG" id="ddi:DDB_G0288449"/>
<dbReference type="dictyBase" id="DDB_G0288449">
    <property type="gene designation" value="rpc2"/>
</dbReference>
<dbReference type="VEuPathDB" id="AmoebaDB:DDB_G0288449"/>
<dbReference type="eggNOG" id="KOG0215">
    <property type="taxonomic scope" value="Eukaryota"/>
</dbReference>
<dbReference type="HOGENOM" id="CLU_000524_5_1_1"/>
<dbReference type="InParanoid" id="Q54IZ9"/>
<dbReference type="OMA" id="LAYCSWC"/>
<dbReference type="Reactome" id="R-DDI-76061">
    <property type="pathway name" value="RNA Polymerase III Transcription Initiation From Type 1 Promoter"/>
</dbReference>
<dbReference type="Reactome" id="R-DDI-76066">
    <property type="pathway name" value="RNA Polymerase III Transcription Initiation From Type 2 Promoter"/>
</dbReference>
<dbReference type="PRO" id="PR:Q54IZ9"/>
<dbReference type="Proteomes" id="UP000002195">
    <property type="component" value="Chromosome 5"/>
</dbReference>
<dbReference type="GO" id="GO:0005739">
    <property type="term" value="C:mitochondrion"/>
    <property type="evidence" value="ECO:0007669"/>
    <property type="project" value="GOC"/>
</dbReference>
<dbReference type="GO" id="GO:0005736">
    <property type="term" value="C:RNA polymerase I complex"/>
    <property type="evidence" value="ECO:0000250"/>
    <property type="project" value="dictyBase"/>
</dbReference>
<dbReference type="GO" id="GO:0005666">
    <property type="term" value="C:RNA polymerase III complex"/>
    <property type="evidence" value="ECO:0000318"/>
    <property type="project" value="GO_Central"/>
</dbReference>
<dbReference type="GO" id="GO:0003677">
    <property type="term" value="F:DNA binding"/>
    <property type="evidence" value="ECO:0007669"/>
    <property type="project" value="InterPro"/>
</dbReference>
<dbReference type="GO" id="GO:0003899">
    <property type="term" value="F:DNA-directed RNA polymerase activity"/>
    <property type="evidence" value="ECO:0000250"/>
    <property type="project" value="dictyBase"/>
</dbReference>
<dbReference type="GO" id="GO:0032549">
    <property type="term" value="F:ribonucleoside binding"/>
    <property type="evidence" value="ECO:0007669"/>
    <property type="project" value="InterPro"/>
</dbReference>
<dbReference type="GO" id="GO:0008270">
    <property type="term" value="F:zinc ion binding"/>
    <property type="evidence" value="ECO:0007669"/>
    <property type="project" value="UniProtKB-KW"/>
</dbReference>
<dbReference type="GO" id="GO:0016539">
    <property type="term" value="P:intein-mediated protein splicing"/>
    <property type="evidence" value="ECO:0007669"/>
    <property type="project" value="InterPro"/>
</dbReference>
<dbReference type="GO" id="GO:0006360">
    <property type="term" value="P:transcription by RNA polymerase I"/>
    <property type="evidence" value="ECO:0000250"/>
    <property type="project" value="dictyBase"/>
</dbReference>
<dbReference type="CDD" id="cd00081">
    <property type="entry name" value="Hint"/>
    <property type="match status" value="1"/>
</dbReference>
<dbReference type="CDD" id="cd00653">
    <property type="entry name" value="RNA_pol_B_RPB2"/>
    <property type="match status" value="1"/>
</dbReference>
<dbReference type="FunFam" id="2.170.16.10:FF:000018">
    <property type="entry name" value="DNA-directed RNA polymerase III subunit rpc2"/>
    <property type="match status" value="1"/>
</dbReference>
<dbReference type="FunFam" id="2.40.270.10:FF:000006">
    <property type="entry name" value="DNA-directed RNA polymerase subunit beta"/>
    <property type="match status" value="1"/>
</dbReference>
<dbReference type="FunFam" id="2.40.270.10:FF:000011">
    <property type="entry name" value="DNA-directed RNA polymerase subunit beta"/>
    <property type="match status" value="1"/>
</dbReference>
<dbReference type="FunFam" id="3.90.1070.20:FF:000002">
    <property type="entry name" value="DNA-directed RNA polymerase subunit beta"/>
    <property type="match status" value="1"/>
</dbReference>
<dbReference type="FunFam" id="3.90.1100.10:FF:000013">
    <property type="entry name" value="DNA-directed RNA polymerase subunit beta"/>
    <property type="match status" value="1"/>
</dbReference>
<dbReference type="FunFam" id="3.90.1110.10:FF:000018">
    <property type="entry name" value="DNA-directed RNA polymerase subunit beta"/>
    <property type="match status" value="1"/>
</dbReference>
<dbReference type="FunFam" id="3.90.1800.10:FF:000003">
    <property type="entry name" value="DNA-directed RNA polymerase subunit beta"/>
    <property type="match status" value="1"/>
</dbReference>
<dbReference type="Gene3D" id="2.40.50.150">
    <property type="match status" value="1"/>
</dbReference>
<dbReference type="Gene3D" id="3.90.1070.20">
    <property type="match status" value="1"/>
</dbReference>
<dbReference type="Gene3D" id="3.90.1100.10">
    <property type="match status" value="1"/>
</dbReference>
<dbReference type="Gene3D" id="2.40.270.10">
    <property type="entry name" value="DNA-directed RNA polymerase, subunit 2, domain 6"/>
    <property type="match status" value="1"/>
</dbReference>
<dbReference type="Gene3D" id="2.170.16.10">
    <property type="entry name" value="Hedgehog/Intein (Hint) domain"/>
    <property type="match status" value="1"/>
</dbReference>
<dbReference type="Gene3D" id="3.90.1800.10">
    <property type="entry name" value="RNA polymerase alpha subunit dimerisation domain"/>
    <property type="match status" value="1"/>
</dbReference>
<dbReference type="Gene3D" id="3.90.1110.10">
    <property type="entry name" value="RNA polymerase Rpb2, domain 2"/>
    <property type="match status" value="1"/>
</dbReference>
<dbReference type="InterPro" id="IPR015712">
    <property type="entry name" value="DNA-dir_RNA_pol_su2"/>
</dbReference>
<dbReference type="InterPro" id="IPR007120">
    <property type="entry name" value="DNA-dir_RNAP_su2_dom"/>
</dbReference>
<dbReference type="InterPro" id="IPR037033">
    <property type="entry name" value="DNA-dir_RNAP_su2_hyb_sf"/>
</dbReference>
<dbReference type="InterPro" id="IPR003587">
    <property type="entry name" value="Hint_dom_N"/>
</dbReference>
<dbReference type="InterPro" id="IPR036844">
    <property type="entry name" value="Hint_dom_sf"/>
</dbReference>
<dbReference type="InterPro" id="IPR030934">
    <property type="entry name" value="Intein_C"/>
</dbReference>
<dbReference type="InterPro" id="IPR006141">
    <property type="entry name" value="Intein_N"/>
</dbReference>
<dbReference type="InterPro" id="IPR007121">
    <property type="entry name" value="RNA_pol_bsu_CS"/>
</dbReference>
<dbReference type="InterPro" id="IPR007644">
    <property type="entry name" value="RNA_pol_bsu_protrusion"/>
</dbReference>
<dbReference type="InterPro" id="IPR007642">
    <property type="entry name" value="RNA_pol_Rpb2_2"/>
</dbReference>
<dbReference type="InterPro" id="IPR037034">
    <property type="entry name" value="RNA_pol_Rpb2_2_sf"/>
</dbReference>
<dbReference type="InterPro" id="IPR007645">
    <property type="entry name" value="RNA_pol_Rpb2_3"/>
</dbReference>
<dbReference type="InterPro" id="IPR007646">
    <property type="entry name" value="RNA_pol_Rpb2_4"/>
</dbReference>
<dbReference type="InterPro" id="IPR007647">
    <property type="entry name" value="RNA_pol_Rpb2_5"/>
</dbReference>
<dbReference type="InterPro" id="IPR007641">
    <property type="entry name" value="RNA_pol_Rpb2_7"/>
</dbReference>
<dbReference type="InterPro" id="IPR014724">
    <property type="entry name" value="RNA_pol_RPB2_OB-fold"/>
</dbReference>
<dbReference type="NCBIfam" id="TIGR01443">
    <property type="entry name" value="intein_Cterm"/>
    <property type="match status" value="1"/>
</dbReference>
<dbReference type="NCBIfam" id="TIGR01445">
    <property type="entry name" value="intein_Nterm"/>
    <property type="match status" value="1"/>
</dbReference>
<dbReference type="PANTHER" id="PTHR20856">
    <property type="entry name" value="DNA-DIRECTED RNA POLYMERASE I SUBUNIT 2"/>
    <property type="match status" value="1"/>
</dbReference>
<dbReference type="Pfam" id="PF04563">
    <property type="entry name" value="RNA_pol_Rpb2_1"/>
    <property type="match status" value="1"/>
</dbReference>
<dbReference type="Pfam" id="PF04561">
    <property type="entry name" value="RNA_pol_Rpb2_2"/>
    <property type="match status" value="1"/>
</dbReference>
<dbReference type="Pfam" id="PF04565">
    <property type="entry name" value="RNA_pol_Rpb2_3"/>
    <property type="match status" value="1"/>
</dbReference>
<dbReference type="Pfam" id="PF04566">
    <property type="entry name" value="RNA_pol_Rpb2_4"/>
    <property type="match status" value="1"/>
</dbReference>
<dbReference type="Pfam" id="PF04567">
    <property type="entry name" value="RNA_pol_Rpb2_5"/>
    <property type="match status" value="1"/>
</dbReference>
<dbReference type="Pfam" id="PF00562">
    <property type="entry name" value="RNA_pol_Rpb2_6"/>
    <property type="match status" value="1"/>
</dbReference>
<dbReference type="Pfam" id="PF04560">
    <property type="entry name" value="RNA_pol_Rpb2_7"/>
    <property type="match status" value="1"/>
</dbReference>
<dbReference type="SMART" id="SM00306">
    <property type="entry name" value="HintN"/>
    <property type="match status" value="1"/>
</dbReference>
<dbReference type="SUPFAM" id="SSF64484">
    <property type="entry name" value="beta and beta-prime subunits of DNA dependent RNA-polymerase"/>
    <property type="match status" value="2"/>
</dbReference>
<dbReference type="SUPFAM" id="SSF51294">
    <property type="entry name" value="Hedgehog/intein (Hint) domain"/>
    <property type="match status" value="1"/>
</dbReference>
<dbReference type="PROSITE" id="PS50818">
    <property type="entry name" value="INTEIN_C_TER"/>
    <property type="match status" value="1"/>
</dbReference>
<dbReference type="PROSITE" id="PS50817">
    <property type="entry name" value="INTEIN_N_TER"/>
    <property type="match status" value="1"/>
</dbReference>
<dbReference type="PROSITE" id="PS01166">
    <property type="entry name" value="RNA_POL_BETA"/>
    <property type="match status" value="1"/>
</dbReference>
<accession>Q54IZ9</accession>
<proteinExistence type="inferred from homology"/>
<keyword id="KW-0068">Autocatalytic cleavage</keyword>
<keyword id="KW-0240">DNA-directed RNA polymerase</keyword>
<keyword id="KW-0479">Metal-binding</keyword>
<keyword id="KW-0548">Nucleotidyltransferase</keyword>
<keyword id="KW-0539">Nucleus</keyword>
<keyword id="KW-0651">Protein splicing</keyword>
<keyword id="KW-1185">Reference proteome</keyword>
<keyword id="KW-0804">Transcription</keyword>
<keyword id="KW-0808">Transferase</keyword>
<keyword id="KW-0862">Zinc</keyword>
<keyword id="KW-0863">Zinc-finger</keyword>
<name>RPC2_DICDI</name>
<sequence length="1608" mass="183030">MDPESVGYCNNPDFLHKGSMDELYNISKLTDDIKPVEEKWKLVPAFMKCRGLVKQHIDSFNFFINVEMKKIVKANERLTAENDPSYFVRFTDINVGSPTSTEDNLDSVQLTPQRCRLRDMTYSAPIFVNIEYTRNKQIISKRDVHIGNIPIMLRSSNCVLSKKTPEQMAALGECPMDPGGYFIVRGQEKVILNHEQLSKNRIIIEMDSKGLPSASVTSSTHERKSRTGVTLKNEKLYLKHNTFGEDIPVAIVLKGMGVETDQEMAQLVGSDDVFLNAITPSLEECQKCGVHTAAQALDYLGSRIKVFRRPYGVQNKKTKSEEARDILAGVVLNHVPVRRYNFRLKVIYLSLMIRRIIMASKDKSCLDDKDYYGNKRIELSGQLISLLFEDCFKKFQSELKKSVDQAIAKANRAENLDLPKLIRTDTITNGFTHAISSGQWNLKRFRMERSGVSQVLSRLSYISCMGMMTRIQSQFEKTRKVAGPRSLQPSQWGMLCPSDTPEGEACLHPDTIITMSNGQQKPIRQLKDGDSIITLDPITMEAHSTRIYSHFIKSSSQYGKQLLKITTITGKEIICTNDHRFLTSNGNWKQSKDLLLNDKLFLISSSNQLEFNNNNNENNNENNNDIIEILNENQLINQGVVPIKIIQELKSIELLPLLNNNEKLITISRIIGSIDKIGSNKQNEPIIQYQFNLISDFDQFLKDLQYLGFINPIYKLNEEQQQQQQQKIDHQQQQQQQVEQQQKSIIIDFIGSSFGYFIQSLLNEKNWIEKSNNQFVKKEFLSSFISNVNRIQFNIIEEINQQNNDSNFKILLNYKQQKQQQNEKEERAVVDHDNEIFNIKSLQILLNQFNVISSIDFEESNLIIINSSLKKFIDLINIKFNQKLNNQIIQIREYLNYINYNNNNNNNEEINIKKKDFGYFKKLKIKRNSFEIEIEKIEQLNYQDCPEISDFTTESDYHSMISNGFVSHNCGLVKNFALMSHVTTDDSEGPLLRLAYNLGVQDILLVTGEELNSRNAYLVLLNGQIIGIHNSPDYFVTTLRKMRRAGRIREFVSICKNKAQQTISVACDGGRLCRPVIIVDDQRPRLTQEHIEDLKDGLRTFDDFIREGIIEYLDVNEENDSFLAWREAAIQPWTTHLEIEPFTMLGCVAGLIPYPHHNQSPRNTYQCAMGKQAIGAIAYNQLTRIDTLLYLLVHTQRPLCQTRTIDLLNWYKLPAGHNATVAVMSYSGYDIEDALVMNKASLDRGFGRCIVLKKQVTSIKKHGNDTSDRIFPPTPNDLRQPKYGLLDSDGIAKPGELAQKGQILVNKYSPLNTIDATPNPELIPDSAYKSSYMGYKYDNPAFIDKVLLTSGDDEQLLIKMLMRSTRRPELGDKFSSRHGQKGVCGIIVKQEDMPFSDLGICPDIIMNPHGFPSRMTIGKMIELLAGKAGVLSGKFGFGTCFGGDRVENISKVLISKGFSYGGKDYVTSGVTGEPLACFIFFGPIFYQKLKHMVMDKMHARARGPTVTLTRQPTEGRARGGGLRLGEMERDCLIGYGASALIMERLMISSDRFTVYACKNCGFLGYEGYCQYCKSSVDISTIQIPYACKLLFQELQAMNIVPRLKLVDS</sequence>
<organism>
    <name type="scientific">Dictyostelium discoideum</name>
    <name type="common">Social amoeba</name>
    <dbReference type="NCBI Taxonomy" id="44689"/>
    <lineage>
        <taxon>Eukaryota</taxon>
        <taxon>Amoebozoa</taxon>
        <taxon>Evosea</taxon>
        <taxon>Eumycetozoa</taxon>
        <taxon>Dictyostelia</taxon>
        <taxon>Dictyosteliales</taxon>
        <taxon>Dictyosteliaceae</taxon>
        <taxon>Dictyostelium</taxon>
    </lineage>
</organism>